<comment type="similarity">
    <text evidence="1">Belongs to the UPF0301 (AlgH) family.</text>
</comment>
<proteinExistence type="evidence at protein level"/>
<dbReference type="EMBL" id="AE014299">
    <property type="protein sequence ID" value="AAN56344.1"/>
    <property type="molecule type" value="Genomic_DNA"/>
</dbReference>
<dbReference type="RefSeq" id="NP_718900.1">
    <property type="nucleotide sequence ID" value="NC_004347.2"/>
</dbReference>
<dbReference type="RefSeq" id="WP_011073216.1">
    <property type="nucleotide sequence ID" value="NC_004347.2"/>
</dbReference>
<dbReference type="PDB" id="2GZO">
    <property type="method" value="NMR"/>
    <property type="chains" value="A=1-187"/>
</dbReference>
<dbReference type="PDBsum" id="2GZO"/>
<dbReference type="BMRB" id="Q8EBZ9"/>
<dbReference type="SMR" id="Q8EBZ9"/>
<dbReference type="STRING" id="211586.SO_3346"/>
<dbReference type="PaxDb" id="211586-SO_3346"/>
<dbReference type="KEGG" id="son:SO_3346"/>
<dbReference type="PATRIC" id="fig|211586.12.peg.3246"/>
<dbReference type="eggNOG" id="COG1678">
    <property type="taxonomic scope" value="Bacteria"/>
</dbReference>
<dbReference type="HOGENOM" id="CLU_057596_1_0_6"/>
<dbReference type="OrthoDB" id="9807486at2"/>
<dbReference type="PhylomeDB" id="Q8EBZ9"/>
<dbReference type="BioCyc" id="SONE211586:G1GMP-3114-MONOMER"/>
<dbReference type="EvolutionaryTrace" id="Q8EBZ9"/>
<dbReference type="Proteomes" id="UP000008186">
    <property type="component" value="Chromosome"/>
</dbReference>
<dbReference type="GO" id="GO:0005829">
    <property type="term" value="C:cytosol"/>
    <property type="evidence" value="ECO:0000318"/>
    <property type="project" value="GO_Central"/>
</dbReference>
<dbReference type="Gene3D" id="3.40.1740.10">
    <property type="entry name" value="VC0467-like"/>
    <property type="match status" value="1"/>
</dbReference>
<dbReference type="Gene3D" id="3.30.70.1300">
    <property type="entry name" value="VC0467-like domains"/>
    <property type="match status" value="1"/>
</dbReference>
<dbReference type="HAMAP" id="MF_00758">
    <property type="entry name" value="UPF0301"/>
    <property type="match status" value="1"/>
</dbReference>
<dbReference type="InterPro" id="IPR003774">
    <property type="entry name" value="AlgH-like"/>
</dbReference>
<dbReference type="NCBIfam" id="NF001266">
    <property type="entry name" value="PRK00228.1-1"/>
    <property type="match status" value="1"/>
</dbReference>
<dbReference type="PANTHER" id="PTHR30327">
    <property type="entry name" value="UNCHARACTERIZED PROTEIN YQGE"/>
    <property type="match status" value="1"/>
</dbReference>
<dbReference type="PANTHER" id="PTHR30327:SF1">
    <property type="entry name" value="UPF0301 PROTEIN YQGE"/>
    <property type="match status" value="1"/>
</dbReference>
<dbReference type="Pfam" id="PF02622">
    <property type="entry name" value="DUF179"/>
    <property type="match status" value="1"/>
</dbReference>
<dbReference type="SUPFAM" id="SSF143456">
    <property type="entry name" value="VC0467-like"/>
    <property type="match status" value="1"/>
</dbReference>
<organism>
    <name type="scientific">Shewanella oneidensis (strain ATCC 700550 / JCM 31522 / CIP 106686 / LMG 19005 / NCIMB 14063 / MR-1)</name>
    <dbReference type="NCBI Taxonomy" id="211586"/>
    <lineage>
        <taxon>Bacteria</taxon>
        <taxon>Pseudomonadati</taxon>
        <taxon>Pseudomonadota</taxon>
        <taxon>Gammaproteobacteria</taxon>
        <taxon>Alteromonadales</taxon>
        <taxon>Shewanellaceae</taxon>
        <taxon>Shewanella</taxon>
    </lineage>
</organism>
<protein>
    <recommendedName>
        <fullName evidence="1">UPF0301 protein SO_3346</fullName>
    </recommendedName>
</protein>
<keyword id="KW-0002">3D-structure</keyword>
<keyword id="KW-1185">Reference proteome</keyword>
<reference key="1">
    <citation type="journal article" date="2002" name="Nat. Biotechnol.">
        <title>Genome sequence of the dissimilatory metal ion-reducing bacterium Shewanella oneidensis.</title>
        <authorList>
            <person name="Heidelberg J.F."/>
            <person name="Paulsen I.T."/>
            <person name="Nelson K.E."/>
            <person name="Gaidos E.J."/>
            <person name="Nelson W.C."/>
            <person name="Read T.D."/>
            <person name="Eisen J.A."/>
            <person name="Seshadri R."/>
            <person name="Ward N.L."/>
            <person name="Methe B.A."/>
            <person name="Clayton R.A."/>
            <person name="Meyer T."/>
            <person name="Tsapin A."/>
            <person name="Scott J."/>
            <person name="Beanan M.J."/>
            <person name="Brinkac L.M."/>
            <person name="Daugherty S.C."/>
            <person name="DeBoy R.T."/>
            <person name="Dodson R.J."/>
            <person name="Durkin A.S."/>
            <person name="Haft D.H."/>
            <person name="Kolonay J.F."/>
            <person name="Madupu R."/>
            <person name="Peterson J.D."/>
            <person name="Umayam L.A."/>
            <person name="White O."/>
            <person name="Wolf A.M."/>
            <person name="Vamathevan J.J."/>
            <person name="Weidman J.F."/>
            <person name="Impraim M."/>
            <person name="Lee K."/>
            <person name="Berry K.J."/>
            <person name="Lee C."/>
            <person name="Mueller J."/>
            <person name="Khouri H.M."/>
            <person name="Gill J."/>
            <person name="Utterback T.R."/>
            <person name="McDonald L.A."/>
            <person name="Feldblyum T.V."/>
            <person name="Smith H.O."/>
            <person name="Venter J.C."/>
            <person name="Nealson K.H."/>
            <person name="Fraser C.M."/>
        </authorList>
    </citation>
    <scope>NUCLEOTIDE SEQUENCE [LARGE SCALE GENOMIC DNA]</scope>
    <source>
        <strain>ATCC 700550 / JCM 31522 / CIP 106686 / LMG 19005 / NCIMB 14063 / MR-1</strain>
    </source>
</reference>
<accession>Q8EBZ9</accession>
<name>Y3346_SHEON</name>
<evidence type="ECO:0000255" key="1">
    <source>
        <dbReference type="HAMAP-Rule" id="MF_00758"/>
    </source>
</evidence>
<evidence type="ECO:0007829" key="2">
    <source>
        <dbReference type="PDB" id="2GZO"/>
    </source>
</evidence>
<feature type="chain" id="PRO_0000214346" description="UPF0301 protein SO_3346">
    <location>
        <begin position="1"/>
        <end position="187"/>
    </location>
</feature>
<feature type="strand" evidence="2">
    <location>
        <begin position="5"/>
        <end position="11"/>
    </location>
</feature>
<feature type="strand" evidence="2">
    <location>
        <begin position="19"/>
        <end position="27"/>
    </location>
</feature>
<feature type="strand" evidence="2">
    <location>
        <begin position="37"/>
        <end position="39"/>
    </location>
</feature>
<feature type="helix" evidence="2">
    <location>
        <begin position="48"/>
        <end position="55"/>
    </location>
</feature>
<feature type="strand" evidence="2">
    <location>
        <begin position="72"/>
        <end position="75"/>
    </location>
</feature>
<feature type="turn" evidence="2">
    <location>
        <begin position="79"/>
        <end position="81"/>
    </location>
</feature>
<feature type="strand" evidence="2">
    <location>
        <begin position="85"/>
        <end position="88"/>
    </location>
</feature>
<feature type="strand" evidence="2">
    <location>
        <begin position="93"/>
        <end position="95"/>
    </location>
</feature>
<feature type="strand" evidence="2">
    <location>
        <begin position="99"/>
        <end position="106"/>
    </location>
</feature>
<feature type="helix" evidence="2">
    <location>
        <begin position="110"/>
        <end position="115"/>
    </location>
</feature>
<feature type="helix" evidence="2">
    <location>
        <begin position="133"/>
        <end position="136"/>
    </location>
</feature>
<feature type="helix" evidence="2">
    <location>
        <begin position="139"/>
        <end position="145"/>
    </location>
</feature>
<feature type="strand" evidence="2">
    <location>
        <begin position="148"/>
        <end position="151"/>
    </location>
</feature>
<feature type="helix" evidence="2">
    <location>
        <begin position="154"/>
        <end position="157"/>
    </location>
</feature>
<feature type="helix" evidence="2">
    <location>
        <begin position="164"/>
        <end position="171"/>
    </location>
</feature>
<sequence length="187" mass="20707">MESLQNHFLIAMPSLDDTFFERTVIYLCEHDEKGAMGLVINKPLGIEVNSLLEQMDLPTEQVSADLAMGSQVLMGGPVSQDRGFVLHTSQPYWANSTELGSGLMLTTSRDVLTAIGSKRSPDKFLVALGYAGWSKNQLEQELADNSWLTIPADHALLFDINHEDRWQQASRSLGFEAWQLSTQAGHA</sequence>
<gene>
    <name type="ordered locus">SO_3346</name>
</gene>